<dbReference type="EC" id="2.8.4.3" evidence="1"/>
<dbReference type="EMBL" id="CP000939">
    <property type="protein sequence ID" value="ACA44986.1"/>
    <property type="molecule type" value="Genomic_DNA"/>
</dbReference>
<dbReference type="RefSeq" id="WP_003403091.1">
    <property type="nucleotide sequence ID" value="NC_010516.1"/>
</dbReference>
<dbReference type="SMR" id="B1IM69"/>
<dbReference type="KEGG" id="cbb:CLD_2839"/>
<dbReference type="HOGENOM" id="CLU_018697_2_0_9"/>
<dbReference type="Proteomes" id="UP000008541">
    <property type="component" value="Chromosome"/>
</dbReference>
<dbReference type="GO" id="GO:0005829">
    <property type="term" value="C:cytosol"/>
    <property type="evidence" value="ECO:0007669"/>
    <property type="project" value="TreeGrafter"/>
</dbReference>
<dbReference type="GO" id="GO:0051539">
    <property type="term" value="F:4 iron, 4 sulfur cluster binding"/>
    <property type="evidence" value="ECO:0007669"/>
    <property type="project" value="UniProtKB-UniRule"/>
</dbReference>
<dbReference type="GO" id="GO:0046872">
    <property type="term" value="F:metal ion binding"/>
    <property type="evidence" value="ECO:0007669"/>
    <property type="project" value="UniProtKB-KW"/>
</dbReference>
<dbReference type="GO" id="GO:0035597">
    <property type="term" value="F:N6-isopentenyladenosine methylthiotransferase activity"/>
    <property type="evidence" value="ECO:0007669"/>
    <property type="project" value="TreeGrafter"/>
</dbReference>
<dbReference type="CDD" id="cd01335">
    <property type="entry name" value="Radical_SAM"/>
    <property type="match status" value="1"/>
</dbReference>
<dbReference type="FunFam" id="3.40.50.12160:FF:000006">
    <property type="entry name" value="tRNA-2-methylthio-N(6)-dimethylallyladenosine synthase"/>
    <property type="match status" value="1"/>
</dbReference>
<dbReference type="FunFam" id="3.80.30.20:FF:000001">
    <property type="entry name" value="tRNA-2-methylthio-N(6)-dimethylallyladenosine synthase 2"/>
    <property type="match status" value="1"/>
</dbReference>
<dbReference type="Gene3D" id="3.40.50.12160">
    <property type="entry name" value="Methylthiotransferase, N-terminal domain"/>
    <property type="match status" value="1"/>
</dbReference>
<dbReference type="Gene3D" id="3.80.30.20">
    <property type="entry name" value="tm_1862 like domain"/>
    <property type="match status" value="1"/>
</dbReference>
<dbReference type="HAMAP" id="MF_01864">
    <property type="entry name" value="tRNA_metthiotr_MiaB"/>
    <property type="match status" value="1"/>
</dbReference>
<dbReference type="InterPro" id="IPR006638">
    <property type="entry name" value="Elp3/MiaA/NifB-like_rSAM"/>
</dbReference>
<dbReference type="InterPro" id="IPR005839">
    <property type="entry name" value="Methylthiotransferase"/>
</dbReference>
<dbReference type="InterPro" id="IPR020612">
    <property type="entry name" value="Methylthiotransferase_CS"/>
</dbReference>
<dbReference type="InterPro" id="IPR013848">
    <property type="entry name" value="Methylthiotransferase_N"/>
</dbReference>
<dbReference type="InterPro" id="IPR038135">
    <property type="entry name" value="Methylthiotransferase_N_sf"/>
</dbReference>
<dbReference type="InterPro" id="IPR006463">
    <property type="entry name" value="MiaB_methiolase"/>
</dbReference>
<dbReference type="InterPro" id="IPR007197">
    <property type="entry name" value="rSAM"/>
</dbReference>
<dbReference type="InterPro" id="IPR023404">
    <property type="entry name" value="rSAM_horseshoe"/>
</dbReference>
<dbReference type="InterPro" id="IPR002792">
    <property type="entry name" value="TRAM_dom"/>
</dbReference>
<dbReference type="NCBIfam" id="TIGR01574">
    <property type="entry name" value="miaB-methiolase"/>
    <property type="match status" value="1"/>
</dbReference>
<dbReference type="NCBIfam" id="TIGR00089">
    <property type="entry name" value="MiaB/RimO family radical SAM methylthiotransferase"/>
    <property type="match status" value="1"/>
</dbReference>
<dbReference type="PANTHER" id="PTHR43020">
    <property type="entry name" value="CDK5 REGULATORY SUBUNIT-ASSOCIATED PROTEIN 1"/>
    <property type="match status" value="1"/>
</dbReference>
<dbReference type="PANTHER" id="PTHR43020:SF2">
    <property type="entry name" value="MITOCHONDRIAL TRNA METHYLTHIOTRANSFERASE CDK5RAP1"/>
    <property type="match status" value="1"/>
</dbReference>
<dbReference type="Pfam" id="PF04055">
    <property type="entry name" value="Radical_SAM"/>
    <property type="match status" value="1"/>
</dbReference>
<dbReference type="Pfam" id="PF01938">
    <property type="entry name" value="TRAM"/>
    <property type="match status" value="1"/>
</dbReference>
<dbReference type="Pfam" id="PF00919">
    <property type="entry name" value="UPF0004"/>
    <property type="match status" value="1"/>
</dbReference>
<dbReference type="SFLD" id="SFLDF00273">
    <property type="entry name" value="(dimethylallyl)adenosine_tRNA"/>
    <property type="match status" value="1"/>
</dbReference>
<dbReference type="SFLD" id="SFLDG01082">
    <property type="entry name" value="B12-binding_domain_containing"/>
    <property type="match status" value="1"/>
</dbReference>
<dbReference type="SFLD" id="SFLDS00029">
    <property type="entry name" value="Radical_SAM"/>
    <property type="match status" value="1"/>
</dbReference>
<dbReference type="SMART" id="SM00729">
    <property type="entry name" value="Elp3"/>
    <property type="match status" value="1"/>
</dbReference>
<dbReference type="SUPFAM" id="SSF102114">
    <property type="entry name" value="Radical SAM enzymes"/>
    <property type="match status" value="1"/>
</dbReference>
<dbReference type="PROSITE" id="PS51449">
    <property type="entry name" value="MTTASE_N"/>
    <property type="match status" value="1"/>
</dbReference>
<dbReference type="PROSITE" id="PS01278">
    <property type="entry name" value="MTTASE_RADICAL"/>
    <property type="match status" value="1"/>
</dbReference>
<dbReference type="PROSITE" id="PS51918">
    <property type="entry name" value="RADICAL_SAM"/>
    <property type="match status" value="1"/>
</dbReference>
<dbReference type="PROSITE" id="PS50926">
    <property type="entry name" value="TRAM"/>
    <property type="match status" value="1"/>
</dbReference>
<comment type="function">
    <text evidence="1">Catalyzes the methylthiolation of N6-(dimethylallyl)adenosine (i(6)A), leading to the formation of 2-methylthio-N6-(dimethylallyl)adenosine (ms(2)i(6)A) at position 37 in tRNAs that read codons beginning with uridine.</text>
</comment>
<comment type="catalytic activity">
    <reaction evidence="1">
        <text>N(6)-dimethylallyladenosine(37) in tRNA + (sulfur carrier)-SH + AH2 + 2 S-adenosyl-L-methionine = 2-methylsulfanyl-N(6)-dimethylallyladenosine(37) in tRNA + (sulfur carrier)-H + 5'-deoxyadenosine + L-methionine + A + S-adenosyl-L-homocysteine + 2 H(+)</text>
        <dbReference type="Rhea" id="RHEA:37067"/>
        <dbReference type="Rhea" id="RHEA-COMP:10375"/>
        <dbReference type="Rhea" id="RHEA-COMP:10376"/>
        <dbReference type="Rhea" id="RHEA-COMP:14737"/>
        <dbReference type="Rhea" id="RHEA-COMP:14739"/>
        <dbReference type="ChEBI" id="CHEBI:13193"/>
        <dbReference type="ChEBI" id="CHEBI:15378"/>
        <dbReference type="ChEBI" id="CHEBI:17319"/>
        <dbReference type="ChEBI" id="CHEBI:17499"/>
        <dbReference type="ChEBI" id="CHEBI:29917"/>
        <dbReference type="ChEBI" id="CHEBI:57844"/>
        <dbReference type="ChEBI" id="CHEBI:57856"/>
        <dbReference type="ChEBI" id="CHEBI:59789"/>
        <dbReference type="ChEBI" id="CHEBI:64428"/>
        <dbReference type="ChEBI" id="CHEBI:74415"/>
        <dbReference type="ChEBI" id="CHEBI:74417"/>
        <dbReference type="EC" id="2.8.4.3"/>
    </reaction>
</comment>
<comment type="cofactor">
    <cofactor evidence="1">
        <name>[4Fe-4S] cluster</name>
        <dbReference type="ChEBI" id="CHEBI:49883"/>
    </cofactor>
    <text evidence="1">Binds 2 [4Fe-4S] clusters. One cluster is coordinated with 3 cysteines and an exchangeable S-adenosyl-L-methionine.</text>
</comment>
<comment type="subunit">
    <text evidence="1">Monomer.</text>
</comment>
<comment type="subcellular location">
    <subcellularLocation>
        <location evidence="1">Cytoplasm</location>
    </subcellularLocation>
</comment>
<comment type="similarity">
    <text evidence="1">Belongs to the methylthiotransferase family. MiaB subfamily.</text>
</comment>
<evidence type="ECO:0000255" key="1">
    <source>
        <dbReference type="HAMAP-Rule" id="MF_01864"/>
    </source>
</evidence>
<evidence type="ECO:0000255" key="2">
    <source>
        <dbReference type="PROSITE-ProRule" id="PRU01266"/>
    </source>
</evidence>
<sequence>MNEILNTKDINAIGEFFIETWGCQMNEEDSEKLSGMLKKEGYIRTEERENADVIIFNTCCVRENAELKVYGNLGILKGLKSKNPNLIIAVTGCMMQQKGMAETIKKKFPFVDIIIGTHNLHNFPNYLNEVKKKDTSVLKIQEKEDSIIENMPIDRKNSMKAFVTIMYGCNNFCTYCIVPYVRGRERSRTPENIEDEIKKLISEGYKEITLLGQNVNSYGKDLEPKVTFAELLERVNTIDGLERVRFMTSHPKDLTDDVIEAIAKCDKLCEQIHLPVQSGSSEILKKMNRHYDREKYLDVVSKIKKLIPNVALSTDIIVGFPGETEKDFEETLSLVKEVEYDSAFTFLYSIRKGTPAAKFEDQVPEDVKHKRFNRLVEVVNEISAKKNKAYEGKIEEVLVEGTSKNDENKLMGRTRTGKLVNFIGDKDSIGKLVNVKIIKANSFSLTGEEI</sequence>
<protein>
    <recommendedName>
        <fullName evidence="1">tRNA-2-methylthio-N(6)-dimethylallyladenosine synthase</fullName>
        <ecNumber evidence="1">2.8.4.3</ecNumber>
    </recommendedName>
    <alternativeName>
        <fullName evidence="1">(Dimethylallyl)adenosine tRNA methylthiotransferase MiaB</fullName>
    </alternativeName>
    <alternativeName>
        <fullName evidence="1">tRNA-i(6)A37 methylthiotransferase</fullName>
    </alternativeName>
</protein>
<accession>B1IM69</accession>
<name>MIAB_CLOBK</name>
<keyword id="KW-0004">4Fe-4S</keyword>
<keyword id="KW-0963">Cytoplasm</keyword>
<keyword id="KW-0408">Iron</keyword>
<keyword id="KW-0411">Iron-sulfur</keyword>
<keyword id="KW-0479">Metal-binding</keyword>
<keyword id="KW-0949">S-adenosyl-L-methionine</keyword>
<keyword id="KW-0808">Transferase</keyword>
<keyword id="KW-0819">tRNA processing</keyword>
<gene>
    <name evidence="1" type="primary">miaB</name>
    <name type="ordered locus">CLD_2839</name>
</gene>
<reference key="1">
    <citation type="journal article" date="2007" name="PLoS ONE">
        <title>Analysis of the neurotoxin complex genes in Clostridium botulinum A1-A4 and B1 strains: BoNT/A3, /Ba4 and /B1 clusters are located within plasmids.</title>
        <authorList>
            <person name="Smith T.J."/>
            <person name="Hill K.K."/>
            <person name="Foley B.T."/>
            <person name="Detter J.C."/>
            <person name="Munk A.C."/>
            <person name="Bruce D.C."/>
            <person name="Doggett N.A."/>
            <person name="Smith L.A."/>
            <person name="Marks J.D."/>
            <person name="Xie G."/>
            <person name="Brettin T.S."/>
        </authorList>
    </citation>
    <scope>NUCLEOTIDE SEQUENCE [LARGE SCALE GENOMIC DNA]</scope>
    <source>
        <strain>Okra / Type B1</strain>
    </source>
</reference>
<proteinExistence type="inferred from homology"/>
<feature type="chain" id="PRO_0000374227" description="tRNA-2-methylthio-N(6)-dimethylallyladenosine synthase">
    <location>
        <begin position="1"/>
        <end position="450"/>
    </location>
</feature>
<feature type="domain" description="MTTase N-terminal" evidence="1">
    <location>
        <begin position="14"/>
        <end position="132"/>
    </location>
</feature>
<feature type="domain" description="Radical SAM core" evidence="2">
    <location>
        <begin position="155"/>
        <end position="385"/>
    </location>
</feature>
<feature type="domain" description="TRAM" evidence="1">
    <location>
        <begin position="388"/>
        <end position="450"/>
    </location>
</feature>
<feature type="binding site" evidence="1">
    <location>
        <position position="23"/>
    </location>
    <ligand>
        <name>[4Fe-4S] cluster</name>
        <dbReference type="ChEBI" id="CHEBI:49883"/>
        <label>1</label>
    </ligand>
</feature>
<feature type="binding site" evidence="1">
    <location>
        <position position="59"/>
    </location>
    <ligand>
        <name>[4Fe-4S] cluster</name>
        <dbReference type="ChEBI" id="CHEBI:49883"/>
        <label>1</label>
    </ligand>
</feature>
<feature type="binding site" evidence="1">
    <location>
        <position position="93"/>
    </location>
    <ligand>
        <name>[4Fe-4S] cluster</name>
        <dbReference type="ChEBI" id="CHEBI:49883"/>
        <label>1</label>
    </ligand>
</feature>
<feature type="binding site" evidence="1">
    <location>
        <position position="169"/>
    </location>
    <ligand>
        <name>[4Fe-4S] cluster</name>
        <dbReference type="ChEBI" id="CHEBI:49883"/>
        <label>2</label>
        <note>4Fe-4S-S-AdoMet</note>
    </ligand>
</feature>
<feature type="binding site" evidence="1">
    <location>
        <position position="173"/>
    </location>
    <ligand>
        <name>[4Fe-4S] cluster</name>
        <dbReference type="ChEBI" id="CHEBI:49883"/>
        <label>2</label>
        <note>4Fe-4S-S-AdoMet</note>
    </ligand>
</feature>
<feature type="binding site" evidence="1">
    <location>
        <position position="176"/>
    </location>
    <ligand>
        <name>[4Fe-4S] cluster</name>
        <dbReference type="ChEBI" id="CHEBI:49883"/>
        <label>2</label>
        <note>4Fe-4S-S-AdoMet</note>
    </ligand>
</feature>
<organism>
    <name type="scientific">Clostridium botulinum (strain Okra / Type B1)</name>
    <dbReference type="NCBI Taxonomy" id="498213"/>
    <lineage>
        <taxon>Bacteria</taxon>
        <taxon>Bacillati</taxon>
        <taxon>Bacillota</taxon>
        <taxon>Clostridia</taxon>
        <taxon>Eubacteriales</taxon>
        <taxon>Clostridiaceae</taxon>
        <taxon>Clostridium</taxon>
    </lineage>
</organism>